<accession>Q8TGN8</accession>
<feature type="chain" id="PRO_0000299923" description="Putative uncharacterized protein YGR068W-A">
    <location>
        <begin position="1"/>
        <end position="31"/>
    </location>
</feature>
<evidence type="ECO:0000305" key="1"/>
<evidence type="ECO:0000305" key="2">
    <source>
    </source>
</evidence>
<gene>
    <name type="ordered locus">YGR068W-A</name>
</gene>
<protein>
    <recommendedName>
        <fullName>Putative uncharacterized protein YGR068W-A</fullName>
    </recommendedName>
</protein>
<name>YG068_YEAST</name>
<sequence>MASKEYSMLPLCSPSIVSHTSGGSIVLKGSS</sequence>
<dbReference type="EMBL" id="Z72853">
    <property type="status" value="NOT_ANNOTATED_CDS"/>
    <property type="molecule type" value="Genomic_DNA"/>
</dbReference>
<dbReference type="EMBL" id="AF479951">
    <property type="protein sequence ID" value="AAL79264.1"/>
    <property type="molecule type" value="Genomic_DNA"/>
</dbReference>
<dbReference type="STRING" id="4932.YGR068W-A"/>
<dbReference type="PaxDb" id="4932-YGR068W-A"/>
<dbReference type="EnsemblFungi" id="YGR068W-A_mRNA">
    <property type="protein sequence ID" value="YGR068W-A"/>
    <property type="gene ID" value="YGR068W-A"/>
</dbReference>
<dbReference type="AGR" id="SGD:S000028637"/>
<dbReference type="SGD" id="S000028637">
    <property type="gene designation" value="YGR068W-A"/>
</dbReference>
<dbReference type="HOGENOM" id="CLU_3399669_0_0_1"/>
<proteinExistence type="uncertain"/>
<reference key="1">
    <citation type="journal article" date="1997" name="Nature">
        <title>The nucleotide sequence of Saccharomyces cerevisiae chromosome VII.</title>
        <authorList>
            <person name="Tettelin H."/>
            <person name="Agostoni-Carbone M.L."/>
            <person name="Albermann K."/>
            <person name="Albers M."/>
            <person name="Arroyo J."/>
            <person name="Backes U."/>
            <person name="Barreiros T."/>
            <person name="Bertani I."/>
            <person name="Bjourson A.J."/>
            <person name="Brueckner M."/>
            <person name="Bruschi C.V."/>
            <person name="Carignani G."/>
            <person name="Castagnoli L."/>
            <person name="Cerdan E."/>
            <person name="Clemente M.L."/>
            <person name="Coblenz A."/>
            <person name="Coglievina M."/>
            <person name="Coissac E."/>
            <person name="Defoor E."/>
            <person name="Del Bino S."/>
            <person name="Delius H."/>
            <person name="Delneri D."/>
            <person name="de Wergifosse P."/>
            <person name="Dujon B."/>
            <person name="Durand P."/>
            <person name="Entian K.-D."/>
            <person name="Eraso P."/>
            <person name="Escribano V."/>
            <person name="Fabiani L."/>
            <person name="Fartmann B."/>
            <person name="Feroli F."/>
            <person name="Feuermann M."/>
            <person name="Frontali L."/>
            <person name="Garcia-Gonzalez M."/>
            <person name="Garcia-Saez M.I."/>
            <person name="Goffeau A."/>
            <person name="Guerreiro P."/>
            <person name="Hani J."/>
            <person name="Hansen M."/>
            <person name="Hebling U."/>
            <person name="Hernandez K."/>
            <person name="Heumann K."/>
            <person name="Hilger F."/>
            <person name="Hofmann B."/>
            <person name="Indge K.J."/>
            <person name="James C.M."/>
            <person name="Klima R."/>
            <person name="Koetter P."/>
            <person name="Kramer B."/>
            <person name="Kramer W."/>
            <person name="Lauquin G."/>
            <person name="Leuther H."/>
            <person name="Louis E.J."/>
            <person name="Maillier E."/>
            <person name="Marconi A."/>
            <person name="Martegani E."/>
            <person name="Mazon M.J."/>
            <person name="Mazzoni C."/>
            <person name="McReynolds A.D.K."/>
            <person name="Melchioretto P."/>
            <person name="Mewes H.-W."/>
            <person name="Minenkova O."/>
            <person name="Mueller-Auer S."/>
            <person name="Nawrocki A."/>
            <person name="Netter P."/>
            <person name="Neu R."/>
            <person name="Nombela C."/>
            <person name="Oliver S.G."/>
            <person name="Panzeri L."/>
            <person name="Paoluzi S."/>
            <person name="Plevani P."/>
            <person name="Portetelle D."/>
            <person name="Portillo F."/>
            <person name="Potier S."/>
            <person name="Purnelle B."/>
            <person name="Rieger M."/>
            <person name="Riles L."/>
            <person name="Rinaldi T."/>
            <person name="Robben J."/>
            <person name="Rodrigues-Pousada C."/>
            <person name="Rodriguez-Belmonte E."/>
            <person name="Rodriguez-Torres A.M."/>
            <person name="Rose M."/>
            <person name="Ruzzi M."/>
            <person name="Saliola M."/>
            <person name="Sanchez-Perez M."/>
            <person name="Schaefer B."/>
            <person name="Schaefer M."/>
            <person name="Scharfe M."/>
            <person name="Schmidheini T."/>
            <person name="Schreer A."/>
            <person name="Skala J."/>
            <person name="Souciet J.-L."/>
            <person name="Steensma H.Y."/>
            <person name="Talla E."/>
            <person name="Thierry A."/>
            <person name="Vandenbol M."/>
            <person name="van der Aart Q.J.M."/>
            <person name="Van Dyck L."/>
            <person name="Vanoni M."/>
            <person name="Verhasselt P."/>
            <person name="Voet M."/>
            <person name="Volckaert G."/>
            <person name="Wambutt R."/>
            <person name="Watson M.D."/>
            <person name="Weber N."/>
            <person name="Wedler E."/>
            <person name="Wedler H."/>
            <person name="Wipfli P."/>
            <person name="Wolf K."/>
            <person name="Wright L.F."/>
            <person name="Zaccaria P."/>
            <person name="Zimmermann M."/>
            <person name="Zollner A."/>
            <person name="Kleine K."/>
        </authorList>
    </citation>
    <scope>NUCLEOTIDE SEQUENCE [LARGE SCALE GENOMIC DNA]</scope>
    <source>
        <strain>ATCC 204508 / S288c</strain>
    </source>
</reference>
<reference key="2">
    <citation type="journal article" date="2014" name="G3 (Bethesda)">
        <title>The reference genome sequence of Saccharomyces cerevisiae: Then and now.</title>
        <authorList>
            <person name="Engel S.R."/>
            <person name="Dietrich F.S."/>
            <person name="Fisk D.G."/>
            <person name="Binkley G."/>
            <person name="Balakrishnan R."/>
            <person name="Costanzo M.C."/>
            <person name="Dwight S.S."/>
            <person name="Hitz B.C."/>
            <person name="Karra K."/>
            <person name="Nash R.S."/>
            <person name="Weng S."/>
            <person name="Wong E.D."/>
            <person name="Lloyd P."/>
            <person name="Skrzypek M.S."/>
            <person name="Miyasato S.R."/>
            <person name="Simison M."/>
            <person name="Cherry J.M."/>
        </authorList>
    </citation>
    <scope>GENOME REANNOTATION</scope>
    <source>
        <strain>ATCC 204508 / S288c</strain>
    </source>
</reference>
<reference key="3">
    <citation type="journal article" date="2002" name="Nat. Biotechnol.">
        <title>An integrated approach for finding overlooked genes in yeast.</title>
        <authorList>
            <person name="Kumar A."/>
            <person name="Harrison P.M."/>
            <person name="Cheung K.-H."/>
            <person name="Lan N."/>
            <person name="Echols N."/>
            <person name="Bertone P."/>
            <person name="Miller P."/>
            <person name="Gerstein M.B."/>
            <person name="Snyder M."/>
        </authorList>
    </citation>
    <scope>NUCLEOTIDE SEQUENCE [GENOMIC DNA]</scope>
</reference>
<organism>
    <name type="scientific">Saccharomyces cerevisiae (strain ATCC 204508 / S288c)</name>
    <name type="common">Baker's yeast</name>
    <dbReference type="NCBI Taxonomy" id="559292"/>
    <lineage>
        <taxon>Eukaryota</taxon>
        <taxon>Fungi</taxon>
        <taxon>Dikarya</taxon>
        <taxon>Ascomycota</taxon>
        <taxon>Saccharomycotina</taxon>
        <taxon>Saccharomycetes</taxon>
        <taxon>Saccharomycetales</taxon>
        <taxon>Saccharomycetaceae</taxon>
        <taxon>Saccharomyces</taxon>
    </lineage>
</organism>
<comment type="miscellaneous">
    <text evidence="1">Completely overlaps ART5.</text>
</comment>
<comment type="caution">
    <text evidence="2">Product of a dubious gene prediction unlikely to encode a functional protein. Because of that it is not part of the S.cerevisiae S288c complete/reference proteome set.</text>
</comment>